<organism>
    <name type="scientific">Xanthomonas campestris pv. campestris (strain ATCC 33913 / DSM 3586 / NCPPB 528 / LMG 568 / P 25)</name>
    <dbReference type="NCBI Taxonomy" id="190485"/>
    <lineage>
        <taxon>Bacteria</taxon>
        <taxon>Pseudomonadati</taxon>
        <taxon>Pseudomonadota</taxon>
        <taxon>Gammaproteobacteria</taxon>
        <taxon>Lysobacterales</taxon>
        <taxon>Lysobacteraceae</taxon>
        <taxon>Xanthomonas</taxon>
    </lineage>
</organism>
<feature type="chain" id="PRO_0000108557" description="Transcriptional regulator MraZ">
    <location>
        <begin position="1"/>
        <end position="148"/>
    </location>
</feature>
<feature type="domain" description="SpoVT-AbrB 1" evidence="2">
    <location>
        <begin position="5"/>
        <end position="53"/>
    </location>
</feature>
<feature type="domain" description="SpoVT-AbrB 2" evidence="2">
    <location>
        <begin position="82"/>
        <end position="125"/>
    </location>
</feature>
<evidence type="ECO:0000255" key="1">
    <source>
        <dbReference type="HAMAP-Rule" id="MF_01008"/>
    </source>
</evidence>
<evidence type="ECO:0000255" key="2">
    <source>
        <dbReference type="PROSITE-ProRule" id="PRU01076"/>
    </source>
</evidence>
<evidence type="ECO:0000305" key="3"/>
<dbReference type="EMBL" id="AE008922">
    <property type="protein sequence ID" value="AAM40032.1"/>
    <property type="status" value="ALT_INIT"/>
    <property type="molecule type" value="Genomic_DNA"/>
</dbReference>
<dbReference type="RefSeq" id="NP_636108.1">
    <property type="nucleotide sequence ID" value="NC_003902.1"/>
</dbReference>
<dbReference type="SMR" id="Q8PCK8"/>
<dbReference type="STRING" id="190485.XCC0717"/>
<dbReference type="EnsemblBacteria" id="AAM40032">
    <property type="protein sequence ID" value="AAM40032"/>
    <property type="gene ID" value="XCC0717"/>
</dbReference>
<dbReference type="KEGG" id="xcc:XCC0717"/>
<dbReference type="PATRIC" id="fig|190485.4.peg.781"/>
<dbReference type="eggNOG" id="COG2001">
    <property type="taxonomic scope" value="Bacteria"/>
</dbReference>
<dbReference type="HOGENOM" id="CLU_107907_2_0_6"/>
<dbReference type="OrthoDB" id="9807753at2"/>
<dbReference type="Proteomes" id="UP000001010">
    <property type="component" value="Chromosome"/>
</dbReference>
<dbReference type="GO" id="GO:0005737">
    <property type="term" value="C:cytoplasm"/>
    <property type="evidence" value="ECO:0007669"/>
    <property type="project" value="UniProtKB-UniRule"/>
</dbReference>
<dbReference type="GO" id="GO:0009295">
    <property type="term" value="C:nucleoid"/>
    <property type="evidence" value="ECO:0007669"/>
    <property type="project" value="UniProtKB-SubCell"/>
</dbReference>
<dbReference type="GO" id="GO:0003700">
    <property type="term" value="F:DNA-binding transcription factor activity"/>
    <property type="evidence" value="ECO:0000318"/>
    <property type="project" value="GO_Central"/>
</dbReference>
<dbReference type="GO" id="GO:0000976">
    <property type="term" value="F:transcription cis-regulatory region binding"/>
    <property type="evidence" value="ECO:0000318"/>
    <property type="project" value="GO_Central"/>
</dbReference>
<dbReference type="GO" id="GO:2000143">
    <property type="term" value="P:negative regulation of DNA-templated transcription initiation"/>
    <property type="evidence" value="ECO:0000318"/>
    <property type="project" value="GO_Central"/>
</dbReference>
<dbReference type="CDD" id="cd16321">
    <property type="entry name" value="MraZ_C"/>
    <property type="match status" value="1"/>
</dbReference>
<dbReference type="CDD" id="cd16320">
    <property type="entry name" value="MraZ_N"/>
    <property type="match status" value="1"/>
</dbReference>
<dbReference type="FunFam" id="3.40.1550.20:FF:000003">
    <property type="entry name" value="Transcriptional regulator MraZ"/>
    <property type="match status" value="1"/>
</dbReference>
<dbReference type="Gene3D" id="3.40.1550.20">
    <property type="entry name" value="Transcriptional regulator MraZ domain"/>
    <property type="match status" value="1"/>
</dbReference>
<dbReference type="HAMAP" id="MF_01008">
    <property type="entry name" value="MraZ"/>
    <property type="match status" value="1"/>
</dbReference>
<dbReference type="InterPro" id="IPR003444">
    <property type="entry name" value="MraZ"/>
</dbReference>
<dbReference type="InterPro" id="IPR035644">
    <property type="entry name" value="MraZ_C"/>
</dbReference>
<dbReference type="InterPro" id="IPR020603">
    <property type="entry name" value="MraZ_dom"/>
</dbReference>
<dbReference type="InterPro" id="IPR035642">
    <property type="entry name" value="MraZ_N"/>
</dbReference>
<dbReference type="InterPro" id="IPR038619">
    <property type="entry name" value="MraZ_sf"/>
</dbReference>
<dbReference type="InterPro" id="IPR007159">
    <property type="entry name" value="SpoVT-AbrB_dom"/>
</dbReference>
<dbReference type="InterPro" id="IPR037914">
    <property type="entry name" value="SpoVT-AbrB_sf"/>
</dbReference>
<dbReference type="NCBIfam" id="TIGR00242">
    <property type="entry name" value="division/cell wall cluster transcriptional repressor MraZ"/>
    <property type="match status" value="1"/>
</dbReference>
<dbReference type="PANTHER" id="PTHR34701">
    <property type="entry name" value="TRANSCRIPTIONAL REGULATOR MRAZ"/>
    <property type="match status" value="1"/>
</dbReference>
<dbReference type="PANTHER" id="PTHR34701:SF1">
    <property type="entry name" value="TRANSCRIPTIONAL REGULATOR MRAZ"/>
    <property type="match status" value="1"/>
</dbReference>
<dbReference type="Pfam" id="PF02381">
    <property type="entry name" value="MraZ"/>
    <property type="match status" value="2"/>
</dbReference>
<dbReference type="SUPFAM" id="SSF89447">
    <property type="entry name" value="AbrB/MazE/MraZ-like"/>
    <property type="match status" value="1"/>
</dbReference>
<dbReference type="PROSITE" id="PS51740">
    <property type="entry name" value="SPOVT_ABRB"/>
    <property type="match status" value="2"/>
</dbReference>
<sequence length="148" mass="16555">MFQGETAITVDDKGRMAVPTAYRDLVARVSGNRLVLTYNPFEAGCLWLYAEKEWERVRDDVMSKPNTQRVVRTLQQKLVGSSAVLELDANGRLSIPASHRNAVGIEKKAVLLGMGDKFELWSEQAHRALIQQTLSDGDLGDELLDLRL</sequence>
<reference key="1">
    <citation type="journal article" date="2002" name="Nature">
        <title>Comparison of the genomes of two Xanthomonas pathogens with differing host specificities.</title>
        <authorList>
            <person name="da Silva A.C.R."/>
            <person name="Ferro J.A."/>
            <person name="Reinach F.C."/>
            <person name="Farah C.S."/>
            <person name="Furlan L.R."/>
            <person name="Quaggio R.B."/>
            <person name="Monteiro-Vitorello C.B."/>
            <person name="Van Sluys M.A."/>
            <person name="Almeida N.F. Jr."/>
            <person name="Alves L.M.C."/>
            <person name="do Amaral A.M."/>
            <person name="Bertolini M.C."/>
            <person name="Camargo L.E.A."/>
            <person name="Camarotte G."/>
            <person name="Cannavan F."/>
            <person name="Cardozo J."/>
            <person name="Chambergo F."/>
            <person name="Ciapina L.P."/>
            <person name="Cicarelli R.M.B."/>
            <person name="Coutinho L.L."/>
            <person name="Cursino-Santos J.R."/>
            <person name="El-Dorry H."/>
            <person name="Faria J.B."/>
            <person name="Ferreira A.J.S."/>
            <person name="Ferreira R.C.C."/>
            <person name="Ferro M.I.T."/>
            <person name="Formighieri E.F."/>
            <person name="Franco M.C."/>
            <person name="Greggio C.C."/>
            <person name="Gruber A."/>
            <person name="Katsuyama A.M."/>
            <person name="Kishi L.T."/>
            <person name="Leite R.P."/>
            <person name="Lemos E.G.M."/>
            <person name="Lemos M.V.F."/>
            <person name="Locali E.C."/>
            <person name="Machado M.A."/>
            <person name="Madeira A.M.B.N."/>
            <person name="Martinez-Rossi N.M."/>
            <person name="Martins E.C."/>
            <person name="Meidanis J."/>
            <person name="Menck C.F.M."/>
            <person name="Miyaki C.Y."/>
            <person name="Moon D.H."/>
            <person name="Moreira L.M."/>
            <person name="Novo M.T.M."/>
            <person name="Okura V.K."/>
            <person name="Oliveira M.C."/>
            <person name="Oliveira V.R."/>
            <person name="Pereira H.A."/>
            <person name="Rossi A."/>
            <person name="Sena J.A.D."/>
            <person name="Silva C."/>
            <person name="de Souza R.F."/>
            <person name="Spinola L.A.F."/>
            <person name="Takita M.A."/>
            <person name="Tamura R.E."/>
            <person name="Teixeira E.C."/>
            <person name="Tezza R.I.D."/>
            <person name="Trindade dos Santos M."/>
            <person name="Truffi D."/>
            <person name="Tsai S.M."/>
            <person name="White F.F."/>
            <person name="Setubal J.C."/>
            <person name="Kitajima J.P."/>
        </authorList>
    </citation>
    <scope>NUCLEOTIDE SEQUENCE [LARGE SCALE GENOMIC DNA]</scope>
    <source>
        <strain>ATCC 33913 / DSM 3586 / NCPPB 528 / LMG 568 / P 25</strain>
    </source>
</reference>
<gene>
    <name evidence="1" type="primary">mraZ</name>
    <name type="ordered locus">XCC0717</name>
</gene>
<comment type="subunit">
    <text evidence="1">Forms oligomers.</text>
</comment>
<comment type="subcellular location">
    <subcellularLocation>
        <location evidence="1">Cytoplasm</location>
        <location evidence="1">Nucleoid</location>
    </subcellularLocation>
</comment>
<comment type="similarity">
    <text evidence="1">Belongs to the MraZ family.</text>
</comment>
<comment type="sequence caution" evidence="3">
    <conflict type="erroneous initiation">
        <sequence resource="EMBL-CDS" id="AAM40032"/>
    </conflict>
</comment>
<proteinExistence type="inferred from homology"/>
<protein>
    <recommendedName>
        <fullName>Transcriptional regulator MraZ</fullName>
    </recommendedName>
</protein>
<name>MRAZ_XANCP</name>
<accession>Q8PCK8</accession>
<keyword id="KW-0963">Cytoplasm</keyword>
<keyword id="KW-0238">DNA-binding</keyword>
<keyword id="KW-1185">Reference proteome</keyword>
<keyword id="KW-0677">Repeat</keyword>
<keyword id="KW-0804">Transcription</keyword>
<keyword id="KW-0805">Transcription regulation</keyword>